<proteinExistence type="inferred from homology"/>
<comment type="catalytic activity">
    <reaction>
        <text>tRNA(Phe) + L-phenylalanine + ATP = L-phenylalanyl-tRNA(Phe) + AMP + diphosphate + H(+)</text>
        <dbReference type="Rhea" id="RHEA:19413"/>
        <dbReference type="Rhea" id="RHEA-COMP:9668"/>
        <dbReference type="Rhea" id="RHEA-COMP:9699"/>
        <dbReference type="ChEBI" id="CHEBI:15378"/>
        <dbReference type="ChEBI" id="CHEBI:30616"/>
        <dbReference type="ChEBI" id="CHEBI:33019"/>
        <dbReference type="ChEBI" id="CHEBI:58095"/>
        <dbReference type="ChEBI" id="CHEBI:78442"/>
        <dbReference type="ChEBI" id="CHEBI:78531"/>
        <dbReference type="ChEBI" id="CHEBI:456215"/>
        <dbReference type="EC" id="6.1.1.20"/>
    </reaction>
</comment>
<comment type="cofactor">
    <cofactor evidence="1">
        <name>Mg(2+)</name>
        <dbReference type="ChEBI" id="CHEBI:18420"/>
    </cofactor>
    <text evidence="1">Binds 2 magnesium ions per tetramer.</text>
</comment>
<comment type="subunit">
    <text evidence="1">Tetramer of two alpha and two beta subunits.</text>
</comment>
<comment type="subcellular location">
    <subcellularLocation>
        <location evidence="1">Cytoplasm</location>
    </subcellularLocation>
</comment>
<comment type="similarity">
    <text evidence="2">Belongs to the class-II aminoacyl-tRNA synthetase family. Phe-tRNA synthetase alpha subunit type 1 subfamily.</text>
</comment>
<evidence type="ECO:0000250" key="1"/>
<evidence type="ECO:0000305" key="2"/>
<feature type="chain" id="PRO_0000126752" description="Phenylalanine--tRNA ligase alpha subunit">
    <location>
        <begin position="1"/>
        <end position="350"/>
    </location>
</feature>
<feature type="binding site" evidence="1">
    <location>
        <position position="259"/>
    </location>
    <ligand>
        <name>Mg(2+)</name>
        <dbReference type="ChEBI" id="CHEBI:18420"/>
        <note>shared with beta subunit</note>
    </ligand>
</feature>
<gene>
    <name type="primary">pheS</name>
    <name type="ordered locus">RP417</name>
</gene>
<protein>
    <recommendedName>
        <fullName>Phenylalanine--tRNA ligase alpha subunit</fullName>
        <ecNumber>6.1.1.20</ecNumber>
    </recommendedName>
    <alternativeName>
        <fullName>Phenylalanyl-tRNA synthetase alpha subunit</fullName>
        <shortName>PheRS</shortName>
    </alternativeName>
</protein>
<organism>
    <name type="scientific">Rickettsia prowazekii (strain Madrid E)</name>
    <dbReference type="NCBI Taxonomy" id="272947"/>
    <lineage>
        <taxon>Bacteria</taxon>
        <taxon>Pseudomonadati</taxon>
        <taxon>Pseudomonadota</taxon>
        <taxon>Alphaproteobacteria</taxon>
        <taxon>Rickettsiales</taxon>
        <taxon>Rickettsiaceae</taxon>
        <taxon>Rickettsieae</taxon>
        <taxon>Rickettsia</taxon>
        <taxon>typhus group</taxon>
    </lineage>
</organism>
<accession>Q9ZDB5</accession>
<reference key="1">
    <citation type="journal article" date="1998" name="Nature">
        <title>The genome sequence of Rickettsia prowazekii and the origin of mitochondria.</title>
        <authorList>
            <person name="Andersson S.G.E."/>
            <person name="Zomorodipour A."/>
            <person name="Andersson J.O."/>
            <person name="Sicheritz-Ponten T."/>
            <person name="Alsmark U.C.M."/>
            <person name="Podowski R.M."/>
            <person name="Naeslund A.K."/>
            <person name="Eriksson A.-S."/>
            <person name="Winkler H.H."/>
            <person name="Kurland C.G."/>
        </authorList>
    </citation>
    <scope>NUCLEOTIDE SEQUENCE [LARGE SCALE GENOMIC DNA]</scope>
    <source>
        <strain>Madrid E</strain>
    </source>
</reference>
<dbReference type="EC" id="6.1.1.20"/>
<dbReference type="EMBL" id="AJ235271">
    <property type="protein sequence ID" value="CAA14874.1"/>
    <property type="molecule type" value="Genomic_DNA"/>
</dbReference>
<dbReference type="PIR" id="H71699">
    <property type="entry name" value="H71699"/>
</dbReference>
<dbReference type="RefSeq" id="NP_220798.1">
    <property type="nucleotide sequence ID" value="NC_000963.1"/>
</dbReference>
<dbReference type="RefSeq" id="WP_004597612.1">
    <property type="nucleotide sequence ID" value="NC_000963.1"/>
</dbReference>
<dbReference type="SMR" id="Q9ZDB5"/>
<dbReference type="STRING" id="272947.gene:17555497"/>
<dbReference type="EnsemblBacteria" id="CAA14874">
    <property type="protein sequence ID" value="CAA14874"/>
    <property type="gene ID" value="CAA14874"/>
</dbReference>
<dbReference type="GeneID" id="57569542"/>
<dbReference type="KEGG" id="rpr:RP417"/>
<dbReference type="PATRIC" id="fig|272947.5.peg.430"/>
<dbReference type="eggNOG" id="COG0016">
    <property type="taxonomic scope" value="Bacteria"/>
</dbReference>
<dbReference type="HOGENOM" id="CLU_025086_0_1_5"/>
<dbReference type="OrthoDB" id="9800719at2"/>
<dbReference type="Proteomes" id="UP000002480">
    <property type="component" value="Chromosome"/>
</dbReference>
<dbReference type="GO" id="GO:0005737">
    <property type="term" value="C:cytoplasm"/>
    <property type="evidence" value="ECO:0007669"/>
    <property type="project" value="UniProtKB-SubCell"/>
</dbReference>
<dbReference type="GO" id="GO:0005524">
    <property type="term" value="F:ATP binding"/>
    <property type="evidence" value="ECO:0007669"/>
    <property type="project" value="UniProtKB-UniRule"/>
</dbReference>
<dbReference type="GO" id="GO:0000287">
    <property type="term" value="F:magnesium ion binding"/>
    <property type="evidence" value="ECO:0007669"/>
    <property type="project" value="UniProtKB-UniRule"/>
</dbReference>
<dbReference type="GO" id="GO:0004826">
    <property type="term" value="F:phenylalanine-tRNA ligase activity"/>
    <property type="evidence" value="ECO:0007669"/>
    <property type="project" value="UniProtKB-UniRule"/>
</dbReference>
<dbReference type="GO" id="GO:0000049">
    <property type="term" value="F:tRNA binding"/>
    <property type="evidence" value="ECO:0007669"/>
    <property type="project" value="InterPro"/>
</dbReference>
<dbReference type="GO" id="GO:0006432">
    <property type="term" value="P:phenylalanyl-tRNA aminoacylation"/>
    <property type="evidence" value="ECO:0007669"/>
    <property type="project" value="UniProtKB-UniRule"/>
</dbReference>
<dbReference type="CDD" id="cd00496">
    <property type="entry name" value="PheRS_alpha_core"/>
    <property type="match status" value="1"/>
</dbReference>
<dbReference type="Gene3D" id="3.30.930.10">
    <property type="entry name" value="Bira Bifunctional Protein, Domain 2"/>
    <property type="match status" value="1"/>
</dbReference>
<dbReference type="HAMAP" id="MF_00281">
    <property type="entry name" value="Phe_tRNA_synth_alpha1"/>
    <property type="match status" value="1"/>
</dbReference>
<dbReference type="InterPro" id="IPR006195">
    <property type="entry name" value="aa-tRNA-synth_II"/>
</dbReference>
<dbReference type="InterPro" id="IPR045864">
    <property type="entry name" value="aa-tRNA-synth_II/BPL/LPL"/>
</dbReference>
<dbReference type="InterPro" id="IPR004529">
    <property type="entry name" value="Phe-tRNA-synth_IIc_asu"/>
</dbReference>
<dbReference type="InterPro" id="IPR004188">
    <property type="entry name" value="Phe-tRNA_ligase_II_N"/>
</dbReference>
<dbReference type="InterPro" id="IPR022911">
    <property type="entry name" value="Phe_tRNA_ligase_alpha1_bac"/>
</dbReference>
<dbReference type="InterPro" id="IPR002319">
    <property type="entry name" value="Phenylalanyl-tRNA_Synthase"/>
</dbReference>
<dbReference type="InterPro" id="IPR010978">
    <property type="entry name" value="tRNA-bd_arm"/>
</dbReference>
<dbReference type="NCBIfam" id="TIGR00468">
    <property type="entry name" value="pheS"/>
    <property type="match status" value="1"/>
</dbReference>
<dbReference type="PANTHER" id="PTHR11538:SF41">
    <property type="entry name" value="PHENYLALANINE--TRNA LIGASE, MITOCHONDRIAL"/>
    <property type="match status" value="1"/>
</dbReference>
<dbReference type="PANTHER" id="PTHR11538">
    <property type="entry name" value="PHENYLALANYL-TRNA SYNTHETASE"/>
    <property type="match status" value="1"/>
</dbReference>
<dbReference type="Pfam" id="PF02912">
    <property type="entry name" value="Phe_tRNA-synt_N"/>
    <property type="match status" value="1"/>
</dbReference>
<dbReference type="Pfam" id="PF01409">
    <property type="entry name" value="tRNA-synt_2d"/>
    <property type="match status" value="1"/>
</dbReference>
<dbReference type="SUPFAM" id="SSF55681">
    <property type="entry name" value="Class II aaRS and biotin synthetases"/>
    <property type="match status" value="1"/>
</dbReference>
<dbReference type="SUPFAM" id="SSF46589">
    <property type="entry name" value="tRNA-binding arm"/>
    <property type="match status" value="1"/>
</dbReference>
<dbReference type="PROSITE" id="PS50862">
    <property type="entry name" value="AA_TRNA_LIGASE_II"/>
    <property type="match status" value="1"/>
</dbReference>
<keyword id="KW-0030">Aminoacyl-tRNA synthetase</keyword>
<keyword id="KW-0067">ATP-binding</keyword>
<keyword id="KW-0963">Cytoplasm</keyword>
<keyword id="KW-0436">Ligase</keyword>
<keyword id="KW-0460">Magnesium</keyword>
<keyword id="KW-0479">Metal-binding</keyword>
<keyword id="KW-0547">Nucleotide-binding</keyword>
<keyword id="KW-0648">Protein biosynthesis</keyword>
<keyword id="KW-1185">Reference proteome</keyword>
<sequence>MKNIETILKLAEEKIVLVHNLKDLQEYKVEFLGRNGIVTSELKKLGSLINGQKRKEFGLKINTLKDKIHDIIKAKAQNLEAEELHLKLAADKIDLTIPARRYKQGSIHPITQCMDELIQVFSQFGFTIENGPNIENDFYNFTALNFEYDHPARQMHDTFYLKGHENDKPLLLRTHTSTVQIRAMKNGKPPFRFIAPGRTYRSDSDMTHTPMFHQIEGLVIDKNINMGHLKYVIITFIRSFFENSNIELRFRPSFFPFTEPSAEVDIRMNKNDKWLEVLGCGMVHPNVLKNIDINRSEYQGFAFGLGVERFAMLKYNIKDLRRFFEGDIRWLKHYNFESFDIPNLAGGLTK</sequence>
<name>SYFA_RICPR</name>